<organism>
    <name type="scientific">Staphylococcus aureus (strain USA300)</name>
    <dbReference type="NCBI Taxonomy" id="367830"/>
    <lineage>
        <taxon>Bacteria</taxon>
        <taxon>Bacillati</taxon>
        <taxon>Bacillota</taxon>
        <taxon>Bacilli</taxon>
        <taxon>Bacillales</taxon>
        <taxon>Staphylococcaceae</taxon>
        <taxon>Staphylococcus</taxon>
    </lineage>
</organism>
<dbReference type="EMBL" id="CP000255">
    <property type="protein sequence ID" value="ABD20571.1"/>
    <property type="molecule type" value="Genomic_DNA"/>
</dbReference>
<dbReference type="RefSeq" id="WP_000368653.1">
    <property type="nucleotide sequence ID" value="NZ_CP027476.1"/>
</dbReference>
<dbReference type="SMR" id="Q2FGN8"/>
<dbReference type="KEGG" id="saa:SAUSA300_1444"/>
<dbReference type="HOGENOM" id="CLU_045647_5_3_9"/>
<dbReference type="Proteomes" id="UP000001939">
    <property type="component" value="Chromosome"/>
</dbReference>
<dbReference type="GO" id="GO:0005737">
    <property type="term" value="C:cytoplasm"/>
    <property type="evidence" value="ECO:0007669"/>
    <property type="project" value="UniProtKB-SubCell"/>
</dbReference>
<dbReference type="GO" id="GO:0051301">
    <property type="term" value="P:cell division"/>
    <property type="evidence" value="ECO:0007669"/>
    <property type="project" value="UniProtKB-KW"/>
</dbReference>
<dbReference type="GO" id="GO:0051304">
    <property type="term" value="P:chromosome separation"/>
    <property type="evidence" value="ECO:0007669"/>
    <property type="project" value="InterPro"/>
</dbReference>
<dbReference type="GO" id="GO:0006260">
    <property type="term" value="P:DNA replication"/>
    <property type="evidence" value="ECO:0007669"/>
    <property type="project" value="UniProtKB-UniRule"/>
</dbReference>
<dbReference type="Gene3D" id="1.10.10.10">
    <property type="entry name" value="Winged helix-like DNA-binding domain superfamily/Winged helix DNA-binding domain"/>
    <property type="match status" value="2"/>
</dbReference>
<dbReference type="HAMAP" id="MF_01804">
    <property type="entry name" value="ScpB"/>
    <property type="match status" value="1"/>
</dbReference>
<dbReference type="InterPro" id="IPR005234">
    <property type="entry name" value="ScpB_csome_segregation"/>
</dbReference>
<dbReference type="InterPro" id="IPR036388">
    <property type="entry name" value="WH-like_DNA-bd_sf"/>
</dbReference>
<dbReference type="InterPro" id="IPR036390">
    <property type="entry name" value="WH_DNA-bd_sf"/>
</dbReference>
<dbReference type="NCBIfam" id="TIGR00281">
    <property type="entry name" value="SMC-Scp complex subunit ScpB"/>
    <property type="match status" value="1"/>
</dbReference>
<dbReference type="PANTHER" id="PTHR34298">
    <property type="entry name" value="SEGREGATION AND CONDENSATION PROTEIN B"/>
    <property type="match status" value="1"/>
</dbReference>
<dbReference type="PANTHER" id="PTHR34298:SF2">
    <property type="entry name" value="SEGREGATION AND CONDENSATION PROTEIN B"/>
    <property type="match status" value="1"/>
</dbReference>
<dbReference type="Pfam" id="PF04079">
    <property type="entry name" value="SMC_ScpB"/>
    <property type="match status" value="1"/>
</dbReference>
<dbReference type="PIRSF" id="PIRSF019345">
    <property type="entry name" value="ScpB"/>
    <property type="match status" value="1"/>
</dbReference>
<dbReference type="SUPFAM" id="SSF46785">
    <property type="entry name" value="Winged helix' DNA-binding domain"/>
    <property type="match status" value="2"/>
</dbReference>
<feature type="chain" id="PRO_0000273307" description="Segregation and condensation protein B">
    <location>
        <begin position="1"/>
        <end position="180"/>
    </location>
</feature>
<reference key="1">
    <citation type="journal article" date="2006" name="Lancet">
        <title>Complete genome sequence of USA300, an epidemic clone of community-acquired meticillin-resistant Staphylococcus aureus.</title>
        <authorList>
            <person name="Diep B.A."/>
            <person name="Gill S.R."/>
            <person name="Chang R.F."/>
            <person name="Phan T.H."/>
            <person name="Chen J.H."/>
            <person name="Davidson M.G."/>
            <person name="Lin F."/>
            <person name="Lin J."/>
            <person name="Carleton H.A."/>
            <person name="Mongodin E.F."/>
            <person name="Sensabaugh G.F."/>
            <person name="Perdreau-Remington F."/>
        </authorList>
    </citation>
    <scope>NUCLEOTIDE SEQUENCE [LARGE SCALE GENOMIC DNA]</scope>
    <source>
        <strain>USA300</strain>
    </source>
</reference>
<gene>
    <name evidence="1" type="primary">scpB</name>
    <name type="ordered locus">SAUSA300_1444</name>
</gene>
<comment type="function">
    <text evidence="1">Participates in chromosomal partition during cell division. May act via the formation of a condensin-like complex containing Smc and ScpA that pull DNA away from mid-cell into both cell halves.</text>
</comment>
<comment type="subunit">
    <text evidence="1">Homodimer. Homodimerization may be required to stabilize the binding of ScpA to the Smc head domains. Component of a cohesin-like complex composed of ScpA, ScpB and the Smc homodimer, in which ScpA and ScpB bind to the head domain of Smc. The presence of the three proteins is required for the association of the complex with DNA.</text>
</comment>
<comment type="subcellular location">
    <subcellularLocation>
        <location evidence="1">Cytoplasm</location>
    </subcellularLocation>
    <text evidence="1">Associated with two foci at the outer edges of the nucleoid region in young cells, and at four foci within both cell halves in older cells.</text>
</comment>
<comment type="similarity">
    <text evidence="1">Belongs to the ScpB family.</text>
</comment>
<keyword id="KW-0131">Cell cycle</keyword>
<keyword id="KW-0132">Cell division</keyword>
<keyword id="KW-0159">Chromosome partition</keyword>
<keyword id="KW-0963">Cytoplasm</keyword>
<name>SCPB_STAA3</name>
<sequence length="180" mass="20236">MDNHGILESLLFTAGDEGLDEKQLLEILDMSKDQLVELIENYSSHGLMIQRFGMTYVLTTKKEAATYIEQLIEQKSQMKLSQAAMEVLSIIAYNQPLSRSDIELIRSINSDGAVKTLIAKGLVEAKVVNEQRSQQLITTDLFLNVFGISNIEDLPTTEEDDEEMDAFFSNLVNQKGENND</sequence>
<evidence type="ECO:0000255" key="1">
    <source>
        <dbReference type="HAMAP-Rule" id="MF_01804"/>
    </source>
</evidence>
<proteinExistence type="inferred from homology"/>
<accession>Q2FGN8</accession>
<protein>
    <recommendedName>
        <fullName evidence="1">Segregation and condensation protein B</fullName>
    </recommendedName>
</protein>